<feature type="chain" id="PRO_0000101638" description="Ribosomal RNA small subunit methyltransferase A">
    <location>
        <begin position="1"/>
        <end position="269"/>
    </location>
</feature>
<feature type="binding site" evidence="1">
    <location>
        <position position="18"/>
    </location>
    <ligand>
        <name>S-adenosyl-L-methionine</name>
        <dbReference type="ChEBI" id="CHEBI:59789"/>
    </ligand>
</feature>
<feature type="binding site" evidence="1">
    <location>
        <position position="20"/>
    </location>
    <ligand>
        <name>S-adenosyl-L-methionine</name>
        <dbReference type="ChEBI" id="CHEBI:59789"/>
    </ligand>
</feature>
<feature type="binding site" evidence="1">
    <location>
        <position position="45"/>
    </location>
    <ligand>
        <name>S-adenosyl-L-methionine</name>
        <dbReference type="ChEBI" id="CHEBI:59789"/>
    </ligand>
</feature>
<feature type="binding site" evidence="1">
    <location>
        <position position="66"/>
    </location>
    <ligand>
        <name>S-adenosyl-L-methionine</name>
        <dbReference type="ChEBI" id="CHEBI:59789"/>
    </ligand>
</feature>
<feature type="binding site" evidence="1">
    <location>
        <position position="91"/>
    </location>
    <ligand>
        <name>S-adenosyl-L-methionine</name>
        <dbReference type="ChEBI" id="CHEBI:59789"/>
    </ligand>
</feature>
<feature type="binding site" evidence="1">
    <location>
        <position position="112"/>
    </location>
    <ligand>
        <name>S-adenosyl-L-methionine</name>
        <dbReference type="ChEBI" id="CHEBI:59789"/>
    </ligand>
</feature>
<keyword id="KW-0963">Cytoplasm</keyword>
<keyword id="KW-0489">Methyltransferase</keyword>
<keyword id="KW-0694">RNA-binding</keyword>
<keyword id="KW-0698">rRNA processing</keyword>
<keyword id="KW-0949">S-adenosyl-L-methionine</keyword>
<keyword id="KW-0808">Transferase</keyword>
<organism>
    <name type="scientific">Vibrio parahaemolyticus serotype O3:K6 (strain RIMD 2210633)</name>
    <dbReference type="NCBI Taxonomy" id="223926"/>
    <lineage>
        <taxon>Bacteria</taxon>
        <taxon>Pseudomonadati</taxon>
        <taxon>Pseudomonadota</taxon>
        <taxon>Gammaproteobacteria</taxon>
        <taxon>Vibrionales</taxon>
        <taxon>Vibrionaceae</taxon>
        <taxon>Vibrio</taxon>
    </lineage>
</organism>
<accession>Q87ST6</accession>
<dbReference type="EC" id="2.1.1.182" evidence="1"/>
<dbReference type="EMBL" id="BA000031">
    <property type="protein sequence ID" value="BAC58599.1"/>
    <property type="molecule type" value="Genomic_DNA"/>
</dbReference>
<dbReference type="RefSeq" id="NP_796715.1">
    <property type="nucleotide sequence ID" value="NC_004603.1"/>
</dbReference>
<dbReference type="RefSeq" id="WP_005459622.1">
    <property type="nucleotide sequence ID" value="NC_004603.1"/>
</dbReference>
<dbReference type="SMR" id="Q87ST6"/>
<dbReference type="GeneID" id="1187803"/>
<dbReference type="KEGG" id="vpa:VP0336"/>
<dbReference type="PATRIC" id="fig|223926.6.peg.323"/>
<dbReference type="eggNOG" id="COG0030">
    <property type="taxonomic scope" value="Bacteria"/>
</dbReference>
<dbReference type="HOGENOM" id="CLU_041220_0_1_6"/>
<dbReference type="Proteomes" id="UP000002493">
    <property type="component" value="Chromosome 1"/>
</dbReference>
<dbReference type="GO" id="GO:0005829">
    <property type="term" value="C:cytosol"/>
    <property type="evidence" value="ECO:0007669"/>
    <property type="project" value="TreeGrafter"/>
</dbReference>
<dbReference type="GO" id="GO:0052908">
    <property type="term" value="F:16S rRNA (adenine(1518)-N(6)/adenine(1519)-N(6))-dimethyltransferase activity"/>
    <property type="evidence" value="ECO:0007669"/>
    <property type="project" value="UniProtKB-EC"/>
</dbReference>
<dbReference type="GO" id="GO:0003723">
    <property type="term" value="F:RNA binding"/>
    <property type="evidence" value="ECO:0007669"/>
    <property type="project" value="UniProtKB-KW"/>
</dbReference>
<dbReference type="FunFam" id="1.10.8.100:FF:000001">
    <property type="entry name" value="Ribosomal RNA small subunit methyltransferase A"/>
    <property type="match status" value="1"/>
</dbReference>
<dbReference type="FunFam" id="3.40.50.150:FF:000006">
    <property type="entry name" value="Ribosomal RNA small subunit methyltransferase A"/>
    <property type="match status" value="1"/>
</dbReference>
<dbReference type="Gene3D" id="1.10.8.100">
    <property type="entry name" value="Ribosomal RNA adenine dimethylase-like, domain 2"/>
    <property type="match status" value="1"/>
</dbReference>
<dbReference type="Gene3D" id="3.40.50.150">
    <property type="entry name" value="Vaccinia Virus protein VP39"/>
    <property type="match status" value="1"/>
</dbReference>
<dbReference type="HAMAP" id="MF_00607">
    <property type="entry name" value="16SrRNA_methyltr_A"/>
    <property type="match status" value="1"/>
</dbReference>
<dbReference type="InterPro" id="IPR001737">
    <property type="entry name" value="KsgA/Erm"/>
</dbReference>
<dbReference type="InterPro" id="IPR023165">
    <property type="entry name" value="rRNA_Ade_diMease-like_C"/>
</dbReference>
<dbReference type="InterPro" id="IPR020596">
    <property type="entry name" value="rRNA_Ade_Mease_Trfase_CS"/>
</dbReference>
<dbReference type="InterPro" id="IPR020598">
    <property type="entry name" value="rRNA_Ade_methylase_Trfase_N"/>
</dbReference>
<dbReference type="InterPro" id="IPR011530">
    <property type="entry name" value="rRNA_adenine_dimethylase"/>
</dbReference>
<dbReference type="InterPro" id="IPR029063">
    <property type="entry name" value="SAM-dependent_MTases_sf"/>
</dbReference>
<dbReference type="NCBIfam" id="TIGR00755">
    <property type="entry name" value="ksgA"/>
    <property type="match status" value="1"/>
</dbReference>
<dbReference type="PANTHER" id="PTHR11727">
    <property type="entry name" value="DIMETHYLADENOSINE TRANSFERASE"/>
    <property type="match status" value="1"/>
</dbReference>
<dbReference type="PANTHER" id="PTHR11727:SF7">
    <property type="entry name" value="DIMETHYLADENOSINE TRANSFERASE-RELATED"/>
    <property type="match status" value="1"/>
</dbReference>
<dbReference type="Pfam" id="PF00398">
    <property type="entry name" value="RrnaAD"/>
    <property type="match status" value="1"/>
</dbReference>
<dbReference type="SMART" id="SM00650">
    <property type="entry name" value="rADc"/>
    <property type="match status" value="1"/>
</dbReference>
<dbReference type="SUPFAM" id="SSF53335">
    <property type="entry name" value="S-adenosyl-L-methionine-dependent methyltransferases"/>
    <property type="match status" value="1"/>
</dbReference>
<dbReference type="PROSITE" id="PS01131">
    <property type="entry name" value="RRNA_A_DIMETH"/>
    <property type="match status" value="1"/>
</dbReference>
<dbReference type="PROSITE" id="PS51689">
    <property type="entry name" value="SAM_RNA_A_N6_MT"/>
    <property type="match status" value="1"/>
</dbReference>
<gene>
    <name evidence="1" type="primary">rsmA</name>
    <name evidence="1" type="synonym">ksgA</name>
    <name type="ordered locus">VP0336</name>
</gene>
<name>RSMA_VIBPA</name>
<comment type="function">
    <text evidence="1">Specifically dimethylates two adjacent adenosines (A1518 and A1519) in the loop of a conserved hairpin near the 3'-end of 16S rRNA in the 30S particle. May play a critical role in biogenesis of 30S subunits.</text>
</comment>
<comment type="catalytic activity">
    <reaction evidence="1">
        <text>adenosine(1518)/adenosine(1519) in 16S rRNA + 4 S-adenosyl-L-methionine = N(6)-dimethyladenosine(1518)/N(6)-dimethyladenosine(1519) in 16S rRNA + 4 S-adenosyl-L-homocysteine + 4 H(+)</text>
        <dbReference type="Rhea" id="RHEA:19609"/>
        <dbReference type="Rhea" id="RHEA-COMP:10232"/>
        <dbReference type="Rhea" id="RHEA-COMP:10233"/>
        <dbReference type="ChEBI" id="CHEBI:15378"/>
        <dbReference type="ChEBI" id="CHEBI:57856"/>
        <dbReference type="ChEBI" id="CHEBI:59789"/>
        <dbReference type="ChEBI" id="CHEBI:74411"/>
        <dbReference type="ChEBI" id="CHEBI:74493"/>
        <dbReference type="EC" id="2.1.1.182"/>
    </reaction>
</comment>
<comment type="subcellular location">
    <subcellularLocation>
        <location evidence="1">Cytoplasm</location>
    </subcellularLocation>
</comment>
<comment type="similarity">
    <text evidence="1">Belongs to the class I-like SAM-binding methyltransferase superfamily. rRNA adenine N(6)-methyltransferase family. RsmA subfamily.</text>
</comment>
<proteinExistence type="inferred from homology"/>
<sequence>MRNDVHLGHKARKRFGQNFLNDPYIIDGIVSAINPKPGQNLVEIGPGLGAITEPVGREVDKFTVIELDRDLAERLRNHPDLADKLTIHEGDAMRFDFTQLVKPNNKLRIFGNLPYNISTPLMFHLFEFHKDIQDMHFMLQKEVVNRLAAGPGSKAYGRLTVMAQYYCKVVPVLEVPPTAFVPPPKVDSAVVRLVPYEELPCPAKDLRLLDRVCREGFNQRRKTVRNCYKSLLSAEVLEELGVNPSMRPENLTLQQFVAMANWLADNPQH</sequence>
<protein>
    <recommendedName>
        <fullName evidence="1">Ribosomal RNA small subunit methyltransferase A</fullName>
        <ecNumber evidence="1">2.1.1.182</ecNumber>
    </recommendedName>
    <alternativeName>
        <fullName evidence="1">16S rRNA (adenine(1518)-N(6)/adenine(1519)-N(6))-dimethyltransferase</fullName>
    </alternativeName>
    <alternativeName>
        <fullName evidence="1">16S rRNA dimethyladenosine transferase</fullName>
    </alternativeName>
    <alternativeName>
        <fullName evidence="1">16S rRNA dimethylase</fullName>
    </alternativeName>
    <alternativeName>
        <fullName evidence="1">S-adenosylmethionine-6-N', N'-adenosyl(rRNA) dimethyltransferase</fullName>
    </alternativeName>
</protein>
<evidence type="ECO:0000255" key="1">
    <source>
        <dbReference type="HAMAP-Rule" id="MF_00607"/>
    </source>
</evidence>
<reference key="1">
    <citation type="journal article" date="2003" name="Lancet">
        <title>Genome sequence of Vibrio parahaemolyticus: a pathogenic mechanism distinct from that of V. cholerae.</title>
        <authorList>
            <person name="Makino K."/>
            <person name="Oshima K."/>
            <person name="Kurokawa K."/>
            <person name="Yokoyama K."/>
            <person name="Uda T."/>
            <person name="Tagomori K."/>
            <person name="Iijima Y."/>
            <person name="Najima M."/>
            <person name="Nakano M."/>
            <person name="Yamashita A."/>
            <person name="Kubota Y."/>
            <person name="Kimura S."/>
            <person name="Yasunaga T."/>
            <person name="Honda T."/>
            <person name="Shinagawa H."/>
            <person name="Hattori M."/>
            <person name="Iida T."/>
        </authorList>
    </citation>
    <scope>NUCLEOTIDE SEQUENCE [LARGE SCALE GENOMIC DNA]</scope>
    <source>
        <strain>RIMD 2210633</strain>
    </source>
</reference>